<name>NIFE_METMI</name>
<protein>
    <recommendedName>
        <fullName>Nitrogenase iron-molybdenum cofactor biosynthesis protein NifE</fullName>
    </recommendedName>
</protein>
<proteinExistence type="inferred from homology"/>
<sequence>MVLNLDTENRKMQDGNNDDDFDLEVQIPNSIFEKLKSIEALKARESPMCVSGKDDSIPTCDQNSTPGMITQRSCVYGGARVVLMPITDAVHLVHGPIGCAACTWDIRGSKSTGDKLYKNGFSTDLQEKDIVFGGEKKLYESILEVNKLYHPGAIFVYSTCVVGLIGDDLKAVCRQAQEATGCRVIPVQSEGFKSFNKTAGHKLACDAMLDYVIGTEEPEEEHPYSINIIGEFNVAGDLWGIIPLYEKMGVKVHTAITGDSTVAKVASAHRSKLNIVQCPKSSNYLAAQMDKKYGIPSFKVNFFGLDETTKSLRAVAEFFGDEEMIKRTEELIKSEIKNLRDEISEYQKDLSGRTVAIYSGAHKSWALVSAFGELDMEIIMSGTQNGKPEDYQQIRDHVCEGTLIVDDASSMELVQLLKEYKPDILISGAKEKYLSLKSGIPHCDFNHDRITAFSGYQGFINFARVVHTAVMTPIWRLSRKMMI</sequence>
<organism>
    <name type="scientific">Methanococcus maripaludis</name>
    <name type="common">Methanococcus deltae</name>
    <dbReference type="NCBI Taxonomy" id="39152"/>
    <lineage>
        <taxon>Archaea</taxon>
        <taxon>Methanobacteriati</taxon>
        <taxon>Methanobacteriota</taxon>
        <taxon>Methanomada group</taxon>
        <taxon>Methanococci</taxon>
        <taxon>Methanococcales</taxon>
        <taxon>Methanococcaceae</taxon>
        <taxon>Methanococcus</taxon>
    </lineage>
</organism>
<comment type="function">
    <text>This protein may play a role in the biosynthesis of the prosthetic group of nitrogenase (FeMo cofactor).</text>
</comment>
<comment type="pathway">
    <text>Cofactor biosynthesis; Fe-Mo cofactor biosynthesis.</text>
</comment>
<comment type="similarity">
    <text evidence="2">Belongs to the NifD/NifK/NifE/NifN family.</text>
</comment>
<evidence type="ECO:0000256" key="1">
    <source>
        <dbReference type="SAM" id="MobiDB-lite"/>
    </source>
</evidence>
<evidence type="ECO:0000305" key="2"/>
<accession>P0CW54</accession>
<accession>P71528</accession>
<feature type="chain" id="PRO_0000153117" description="Nitrogenase iron-molybdenum cofactor biosynthesis protein NifE">
    <location>
        <begin position="1"/>
        <end position="483"/>
    </location>
</feature>
<feature type="region of interest" description="Disordered" evidence="1">
    <location>
        <begin position="1"/>
        <end position="20"/>
    </location>
</feature>
<dbReference type="EMBL" id="U75887">
    <property type="protein sequence ID" value="AAC45517.1"/>
    <property type="molecule type" value="Genomic_DNA"/>
</dbReference>
<dbReference type="PIR" id="T10095">
    <property type="entry name" value="T10095"/>
</dbReference>
<dbReference type="SMR" id="P0CW54"/>
<dbReference type="UniPathway" id="UPA00782"/>
<dbReference type="GO" id="GO:0016163">
    <property type="term" value="F:nitrogenase activity"/>
    <property type="evidence" value="ECO:0007669"/>
    <property type="project" value="InterPro"/>
</dbReference>
<dbReference type="GO" id="GO:0009399">
    <property type="term" value="P:nitrogen fixation"/>
    <property type="evidence" value="ECO:0007669"/>
    <property type="project" value="UniProtKB-KW"/>
</dbReference>
<dbReference type="GO" id="GO:0065003">
    <property type="term" value="P:protein-containing complex assembly"/>
    <property type="evidence" value="ECO:0007669"/>
    <property type="project" value="InterPro"/>
</dbReference>
<dbReference type="CDD" id="cd01968">
    <property type="entry name" value="Nitrogenase_NifE_I"/>
    <property type="match status" value="1"/>
</dbReference>
<dbReference type="Gene3D" id="3.40.50.12380">
    <property type="entry name" value="Nitrogenase MoFe cofactor biosynthesis protein NifE, C-terminal"/>
    <property type="match status" value="1"/>
</dbReference>
<dbReference type="Gene3D" id="3.40.50.1980">
    <property type="entry name" value="Nitrogenase molybdenum iron protein domain"/>
    <property type="match status" value="1"/>
</dbReference>
<dbReference type="InterPro" id="IPR000510">
    <property type="entry name" value="Nase/OxRdtase_comp1"/>
</dbReference>
<dbReference type="InterPro" id="IPR000318">
    <property type="entry name" value="Nase_comp1_CS"/>
</dbReference>
<dbReference type="InterPro" id="IPR005973">
    <property type="entry name" value="NifE"/>
</dbReference>
<dbReference type="InterPro" id="IPR049939">
    <property type="entry name" value="NifE-like"/>
</dbReference>
<dbReference type="NCBIfam" id="TIGR01283">
    <property type="entry name" value="nifE"/>
    <property type="match status" value="1"/>
</dbReference>
<dbReference type="PANTHER" id="PTHR42956">
    <property type="entry name" value="NITROGENASE IRON-MOLYBDENUM COFACTOR BIOSYNTHESIS PROTEIN NIFE"/>
    <property type="match status" value="1"/>
</dbReference>
<dbReference type="PANTHER" id="PTHR42956:SF1">
    <property type="entry name" value="NITROGENASE IRON-MOLYBDENUM COFACTOR BIOSYNTHESIS PROTEIN NIFE"/>
    <property type="match status" value="1"/>
</dbReference>
<dbReference type="Pfam" id="PF00148">
    <property type="entry name" value="Oxidored_nitro"/>
    <property type="match status" value="1"/>
</dbReference>
<dbReference type="SUPFAM" id="SSF53807">
    <property type="entry name" value="Helical backbone' metal receptor"/>
    <property type="match status" value="1"/>
</dbReference>
<dbReference type="PROSITE" id="PS00699">
    <property type="entry name" value="NITROGENASE_1_1"/>
    <property type="match status" value="1"/>
</dbReference>
<dbReference type="PROSITE" id="PS00090">
    <property type="entry name" value="NITROGENASE_1_2"/>
    <property type="match status" value="1"/>
</dbReference>
<gene>
    <name type="primary">nifE</name>
</gene>
<keyword id="KW-0535">Nitrogen fixation</keyword>
<reference key="1">
    <citation type="journal article" date="1997" name="J. Bacteriol.">
        <title>Nitrogenase phylogeny and the molybdenum dependence of nitrogen fixation in Methanococcus maripaludis.</title>
        <authorList>
            <person name="Kessler P.S."/>
            <person name="McLarnan J."/>
            <person name="Leigh J.A."/>
        </authorList>
    </citation>
    <scope>NUCLEOTIDE SEQUENCE [GENOMIC DNA]</scope>
    <source>
        <strain>ATCC 43000 / DSM 2067 / JCM 10722 / JJ</strain>
    </source>
</reference>